<keyword id="KW-0010">Activator</keyword>
<keyword id="KW-0067">ATP-binding</keyword>
<keyword id="KW-0963">Cytoplasm</keyword>
<keyword id="KW-0418">Kinase</keyword>
<keyword id="KW-0547">Nucleotide-binding</keyword>
<keyword id="KW-1185">Reference proteome</keyword>
<keyword id="KW-0677">Repeat</keyword>
<keyword id="KW-0694">RNA-binding</keyword>
<keyword id="KW-0723">Serine/threonine-protein kinase</keyword>
<keyword id="KW-0346">Stress response</keyword>
<keyword id="KW-0808">Transferase</keyword>
<keyword id="KW-0810">Translation regulation</keyword>
<keyword id="KW-0820">tRNA-binding</keyword>
<protein>
    <recommendedName>
        <fullName evidence="9">eIF-2-alpha kinase GCN2</fullName>
    </recommendedName>
    <alternativeName>
        <fullName evidence="1">Serine/threonine-protein kinase gcn2</fullName>
        <ecNumber evidence="1">2.7.11.1</ecNumber>
    </alternativeName>
    <alternativeName>
        <fullName>Serine/threonine-protein kinase ppk28</fullName>
    </alternativeName>
</protein>
<accession>Q9HGN1</accession>
<accession>Q66T01</accession>
<accession>Q9HDW2</accession>
<comment type="function">
    <text evidence="1 6 7">Metabolic-stress sensing protein kinase that phosphorylates the alpha subunit of eukaryotic translation initiation factor 2 (eIF-2-alpha/SUI2) on 'Ser-52' in response to low amino acid, carbon, or purine availability (PubMed:15611163, PubMed:15821139). Required for adapatation to nutrient starvation by acting as a key component of the integrated stress response (ISR), by which cells alter their translational and transcriptional output in response to starvation (PubMed:15821139). Converts phosphorylated eIF-2-alpha/SUI2 either to a competitive inhibitor of translation initiation factor eIF-2B, leading to a global protein synthesis repression, and thus to a reduced overall utilization of amino acids, or to a translational initiation activation of specific mRNAs, such as the transcriptional activator GCN4, and hence allowing GCN4-mediated reprogramming of transcription to alleviate nutrient depletion (PubMed:15821139). Binds uncharged tRNAs (By similarity).</text>
</comment>
<comment type="catalytic activity">
    <reaction evidence="1">
        <text>L-seryl-[protein] + ATP = O-phospho-L-seryl-[protein] + ADP + H(+)</text>
        <dbReference type="Rhea" id="RHEA:17989"/>
        <dbReference type="Rhea" id="RHEA-COMP:9863"/>
        <dbReference type="Rhea" id="RHEA-COMP:11604"/>
        <dbReference type="ChEBI" id="CHEBI:15378"/>
        <dbReference type="ChEBI" id="CHEBI:29999"/>
        <dbReference type="ChEBI" id="CHEBI:30616"/>
        <dbReference type="ChEBI" id="CHEBI:83421"/>
        <dbReference type="ChEBI" id="CHEBI:456216"/>
        <dbReference type="EC" id="2.7.11.1"/>
    </reaction>
</comment>
<comment type="catalytic activity">
    <reaction evidence="1">
        <text>L-threonyl-[protein] + ATP = O-phospho-L-threonyl-[protein] + ADP + H(+)</text>
        <dbReference type="Rhea" id="RHEA:46608"/>
        <dbReference type="Rhea" id="RHEA-COMP:11060"/>
        <dbReference type="Rhea" id="RHEA-COMP:11605"/>
        <dbReference type="ChEBI" id="CHEBI:15378"/>
        <dbReference type="ChEBI" id="CHEBI:30013"/>
        <dbReference type="ChEBI" id="CHEBI:30616"/>
        <dbReference type="ChEBI" id="CHEBI:61977"/>
        <dbReference type="ChEBI" id="CHEBI:456216"/>
        <dbReference type="EC" id="2.7.11.1"/>
    </reaction>
</comment>
<comment type="activity regulation">
    <text evidence="1">The integrated stress response (ISR) is activated in response to conditions that promote ribosome collisions: gcn1, which acts as a ribosome collision sensor, activates gcn2. The RQC pathway and the integrated stress response (ISR) antagonize each other: hel2 prevents the activation of gcn2, while gcn2 suppresses RQC activation. Ribosome stalling-induced integrated stress response prefers ribosomes with empty A sites. The kinase activity is stimulated upon binding to uncharged tRNAs.</text>
</comment>
<comment type="subunit">
    <text evidence="1">Homodimer; homodimerization is important for kinase activation by uncharged tRNAs. Interacts (via N-terminal RWD domain) with gcn1 (via N- and C-terminus); this interaction stimulates gcn2 kinase activity in a gcn20-dependent manner in response to amino acid starvation. Interacts (via N-terminus) with the gcn1-gcn20 complex on translating ribosomes in amino acid-starved cells; gcn1 may bind near the ribosomal A-site and promotes the transfer of uncharged tRNAs from the A-site to the tRNA-binding domain in gcn2 for its subsequent kinase activation, and hence allowing fil1 translational activation and derepression of amino acid biosynthetic genes.</text>
</comment>
<comment type="subcellular location">
    <subcellularLocation>
        <location evidence="1">Cytoplasm</location>
    </subcellularLocation>
</comment>
<comment type="PTM">
    <text evidence="1">Autophosphorylated.</text>
</comment>
<comment type="disruption phenotype">
    <text evidence="8">Decreases translation of transcription factor fil1 (PubMed:29432178). Decreases RNA level and translation of genes involved the response to amino acid starvation (PubMed:29432178).</text>
</comment>
<comment type="similarity">
    <text evidence="2">Belongs to the protein kinase superfamily. Ser/Thr protein kinase family. GCN2 subfamily.</text>
</comment>
<reference key="1">
    <citation type="journal article" date="2004" name="Genetics">
        <title>Differential activation of eIF2 kinases in response to cellular stresses in Schizosaccharomyces pombe.</title>
        <authorList>
            <person name="Zhan K."/>
            <person name="Narasimhan J."/>
            <person name="Wek R.C."/>
        </authorList>
    </citation>
    <scope>NUCLEOTIDE SEQUENCE [MRNA]</scope>
    <scope>FUNCTION</scope>
</reference>
<reference key="2">
    <citation type="journal article" date="2002" name="Nature">
        <title>The genome sequence of Schizosaccharomyces pombe.</title>
        <authorList>
            <person name="Wood V."/>
            <person name="Gwilliam R."/>
            <person name="Rajandream M.A."/>
            <person name="Lyne M.H."/>
            <person name="Lyne R."/>
            <person name="Stewart A."/>
            <person name="Sgouros J.G."/>
            <person name="Peat N."/>
            <person name="Hayles J."/>
            <person name="Baker S.G."/>
            <person name="Basham D."/>
            <person name="Bowman S."/>
            <person name="Brooks K."/>
            <person name="Brown D."/>
            <person name="Brown S."/>
            <person name="Chillingworth T."/>
            <person name="Churcher C.M."/>
            <person name="Collins M."/>
            <person name="Connor R."/>
            <person name="Cronin A."/>
            <person name="Davis P."/>
            <person name="Feltwell T."/>
            <person name="Fraser A."/>
            <person name="Gentles S."/>
            <person name="Goble A."/>
            <person name="Hamlin N."/>
            <person name="Harris D.E."/>
            <person name="Hidalgo J."/>
            <person name="Hodgson G."/>
            <person name="Holroyd S."/>
            <person name="Hornsby T."/>
            <person name="Howarth S."/>
            <person name="Huckle E.J."/>
            <person name="Hunt S."/>
            <person name="Jagels K."/>
            <person name="James K.D."/>
            <person name="Jones L."/>
            <person name="Jones M."/>
            <person name="Leather S."/>
            <person name="McDonald S."/>
            <person name="McLean J."/>
            <person name="Mooney P."/>
            <person name="Moule S."/>
            <person name="Mungall K.L."/>
            <person name="Murphy L.D."/>
            <person name="Niblett D."/>
            <person name="Odell C."/>
            <person name="Oliver K."/>
            <person name="O'Neil S."/>
            <person name="Pearson D."/>
            <person name="Quail M.A."/>
            <person name="Rabbinowitsch E."/>
            <person name="Rutherford K.M."/>
            <person name="Rutter S."/>
            <person name="Saunders D."/>
            <person name="Seeger K."/>
            <person name="Sharp S."/>
            <person name="Skelton J."/>
            <person name="Simmonds M.N."/>
            <person name="Squares R."/>
            <person name="Squares S."/>
            <person name="Stevens K."/>
            <person name="Taylor K."/>
            <person name="Taylor R.G."/>
            <person name="Tivey A."/>
            <person name="Walsh S.V."/>
            <person name="Warren T."/>
            <person name="Whitehead S."/>
            <person name="Woodward J.R."/>
            <person name="Volckaert G."/>
            <person name="Aert R."/>
            <person name="Robben J."/>
            <person name="Grymonprez B."/>
            <person name="Weltjens I."/>
            <person name="Vanstreels E."/>
            <person name="Rieger M."/>
            <person name="Schaefer M."/>
            <person name="Mueller-Auer S."/>
            <person name="Gabel C."/>
            <person name="Fuchs M."/>
            <person name="Duesterhoeft A."/>
            <person name="Fritzc C."/>
            <person name="Holzer E."/>
            <person name="Moestl D."/>
            <person name="Hilbert H."/>
            <person name="Borzym K."/>
            <person name="Langer I."/>
            <person name="Beck A."/>
            <person name="Lehrach H."/>
            <person name="Reinhardt R."/>
            <person name="Pohl T.M."/>
            <person name="Eger P."/>
            <person name="Zimmermann W."/>
            <person name="Wedler H."/>
            <person name="Wambutt R."/>
            <person name="Purnelle B."/>
            <person name="Goffeau A."/>
            <person name="Cadieu E."/>
            <person name="Dreano S."/>
            <person name="Gloux S."/>
            <person name="Lelaure V."/>
            <person name="Mottier S."/>
            <person name="Galibert F."/>
            <person name="Aves S.J."/>
            <person name="Xiang Z."/>
            <person name="Hunt C."/>
            <person name="Moore K."/>
            <person name="Hurst S.M."/>
            <person name="Lucas M."/>
            <person name="Rochet M."/>
            <person name="Gaillardin C."/>
            <person name="Tallada V.A."/>
            <person name="Garzon A."/>
            <person name="Thode G."/>
            <person name="Daga R.R."/>
            <person name="Cruzado L."/>
            <person name="Jimenez J."/>
            <person name="Sanchez M."/>
            <person name="del Rey F."/>
            <person name="Benito J."/>
            <person name="Dominguez A."/>
            <person name="Revuelta J.L."/>
            <person name="Moreno S."/>
            <person name="Armstrong J."/>
            <person name="Forsburg S.L."/>
            <person name="Cerutti L."/>
            <person name="Lowe T."/>
            <person name="McCombie W.R."/>
            <person name="Paulsen I."/>
            <person name="Potashkin J."/>
            <person name="Shpakovski G.V."/>
            <person name="Ussery D."/>
            <person name="Barrell B.G."/>
            <person name="Nurse P."/>
        </authorList>
    </citation>
    <scope>NUCLEOTIDE SEQUENCE [LARGE SCALE GENOMIC DNA]</scope>
    <source>
        <strain>972 / ATCC 24843</strain>
    </source>
</reference>
<reference key="3">
    <citation type="journal article" date="2005" name="Eukaryot. Cell">
        <title>Systematic deletion analysis of fission yeast protein kinases.</title>
        <authorList>
            <person name="Bimbo A."/>
            <person name="Jia Y."/>
            <person name="Poh S.L."/>
            <person name="Karuturi R.K.M."/>
            <person name="den Elzen N."/>
            <person name="Peng X."/>
            <person name="Zheng L."/>
            <person name="O'Connell M."/>
            <person name="Liu E.T."/>
            <person name="Balasubramanian M.K."/>
            <person name="Liu J."/>
        </authorList>
    </citation>
    <scope>IDENTIFICATION</scope>
</reference>
<reference key="4">
    <citation type="journal article" date="2018" name="Proc. Natl. Acad. Sci. U.S.A.">
        <title>General amino acid control in fission yeast is regulated by a nonconserved transcription factor, with functions analogous to Gcn4/Atf4.</title>
        <authorList>
            <person name="Duncan C.D.S."/>
            <person name="Rodriguez-Lopez M."/>
            <person name="Ruis P."/>
            <person name="Baehler J."/>
            <person name="Mata J."/>
        </authorList>
    </citation>
    <scope>FUNCTION</scope>
    <scope>DISRUPTION PHENOTYPE</scope>
</reference>
<dbReference type="EC" id="2.7.11.1" evidence="1"/>
<dbReference type="EMBL" id="AY705913">
    <property type="protein sequence ID" value="AAU11313.1"/>
    <property type="molecule type" value="mRNA"/>
</dbReference>
<dbReference type="EMBL" id="CU329671">
    <property type="protein sequence ID" value="CAC05730.2"/>
    <property type="molecule type" value="Genomic_DNA"/>
</dbReference>
<dbReference type="RefSeq" id="NP_595991.2">
    <property type="nucleotide sequence ID" value="NM_001021898.2"/>
</dbReference>
<dbReference type="SMR" id="Q9HGN1"/>
<dbReference type="BioGRID" id="277028">
    <property type="interactions" value="51"/>
</dbReference>
<dbReference type="FunCoup" id="Q9HGN1">
    <property type="interactions" value="756"/>
</dbReference>
<dbReference type="STRING" id="284812.Q9HGN1"/>
<dbReference type="iPTMnet" id="Q9HGN1"/>
<dbReference type="PaxDb" id="4896-SPBC36B7.09.1"/>
<dbReference type="EnsemblFungi" id="SPBC36B7.09.1">
    <property type="protein sequence ID" value="SPBC36B7.09.1:pep"/>
    <property type="gene ID" value="SPBC36B7.09"/>
</dbReference>
<dbReference type="GeneID" id="2540500"/>
<dbReference type="KEGG" id="spo:2540500"/>
<dbReference type="PomBase" id="SPBC36B7.09">
    <property type="gene designation" value="gcn2"/>
</dbReference>
<dbReference type="VEuPathDB" id="FungiDB:SPBC36B7.09"/>
<dbReference type="eggNOG" id="KOG1035">
    <property type="taxonomic scope" value="Eukaryota"/>
</dbReference>
<dbReference type="eggNOG" id="KOG1936">
    <property type="taxonomic scope" value="Eukaryota"/>
</dbReference>
<dbReference type="HOGENOM" id="CLU_001222_2_0_1"/>
<dbReference type="InParanoid" id="Q9HGN1"/>
<dbReference type="OMA" id="FEDIAWD"/>
<dbReference type="PhylomeDB" id="Q9HGN1"/>
<dbReference type="PRO" id="PR:Q9HGN1"/>
<dbReference type="Proteomes" id="UP000002485">
    <property type="component" value="Chromosome II"/>
</dbReference>
<dbReference type="GO" id="GO:0005737">
    <property type="term" value="C:cytoplasm"/>
    <property type="evidence" value="ECO:0000318"/>
    <property type="project" value="GO_Central"/>
</dbReference>
<dbReference type="GO" id="GO:0005829">
    <property type="term" value="C:cytosol"/>
    <property type="evidence" value="ECO:0000318"/>
    <property type="project" value="GO_Central"/>
</dbReference>
<dbReference type="GO" id="GO:0005634">
    <property type="term" value="C:nucleus"/>
    <property type="evidence" value="ECO:0000318"/>
    <property type="project" value="GO_Central"/>
</dbReference>
<dbReference type="GO" id="GO:0005524">
    <property type="term" value="F:ATP binding"/>
    <property type="evidence" value="ECO:0000255"/>
    <property type="project" value="PomBase"/>
</dbReference>
<dbReference type="GO" id="GO:0004694">
    <property type="term" value="F:eukaryotic translation initiation factor 2alpha kinase activity"/>
    <property type="evidence" value="ECO:0000314"/>
    <property type="project" value="PomBase"/>
</dbReference>
<dbReference type="GO" id="GO:0106310">
    <property type="term" value="F:protein serine kinase activity"/>
    <property type="evidence" value="ECO:0007669"/>
    <property type="project" value="RHEA"/>
</dbReference>
<dbReference type="GO" id="GO:0000049">
    <property type="term" value="F:tRNA binding"/>
    <property type="evidence" value="ECO:0007669"/>
    <property type="project" value="UniProtKB-KW"/>
</dbReference>
<dbReference type="GO" id="GO:0034198">
    <property type="term" value="P:cellular response to amino acid starvation"/>
    <property type="evidence" value="ECO:0000250"/>
    <property type="project" value="UniProtKB"/>
</dbReference>
<dbReference type="GO" id="GO:0070314">
    <property type="term" value="P:G1 to G0 transition"/>
    <property type="evidence" value="ECO:0000315"/>
    <property type="project" value="PomBase"/>
</dbReference>
<dbReference type="GO" id="GO:0140469">
    <property type="term" value="P:GCN2-mediated signaling"/>
    <property type="evidence" value="ECO:0000315"/>
    <property type="project" value="PomBase"/>
</dbReference>
<dbReference type="GO" id="GO:0031571">
    <property type="term" value="P:mitotic G1 DNA damage checkpoint signaling"/>
    <property type="evidence" value="ECO:0000315"/>
    <property type="project" value="PomBase"/>
</dbReference>
<dbReference type="GO" id="GO:1904689">
    <property type="term" value="P:negative regulation of cytoplasmic translational initiation"/>
    <property type="evidence" value="ECO:0000314"/>
    <property type="project" value="PomBase"/>
</dbReference>
<dbReference type="GO" id="GO:1990625">
    <property type="term" value="P:negative regulation of cytoplasmic translational initiation in response to stress"/>
    <property type="evidence" value="ECO:0000315"/>
    <property type="project" value="PomBase"/>
</dbReference>
<dbReference type="GO" id="GO:1904262">
    <property type="term" value="P:negative regulation of TORC1 signaling"/>
    <property type="evidence" value="ECO:0000315"/>
    <property type="project" value="PomBase"/>
</dbReference>
<dbReference type="GO" id="GO:0032057">
    <property type="term" value="P:negative regulation of translational initiation in response to stress"/>
    <property type="evidence" value="ECO:0000318"/>
    <property type="project" value="GO_Central"/>
</dbReference>
<dbReference type="GO" id="GO:0010508">
    <property type="term" value="P:positive regulation of autophagy"/>
    <property type="evidence" value="ECO:0000315"/>
    <property type="project" value="PomBase"/>
</dbReference>
<dbReference type="GO" id="GO:1990611">
    <property type="term" value="P:regulation of cytoplasmic translational initiation in response to stress"/>
    <property type="evidence" value="ECO:0000250"/>
    <property type="project" value="UniProtKB"/>
</dbReference>
<dbReference type="CDD" id="cd14012">
    <property type="entry name" value="PK_eIF2AK_GCN2_rpt1"/>
    <property type="match status" value="1"/>
</dbReference>
<dbReference type="CDD" id="cd23823">
    <property type="entry name" value="RWD_GCN2"/>
    <property type="match status" value="1"/>
</dbReference>
<dbReference type="CDD" id="cd14046">
    <property type="entry name" value="STKc_EIF2AK4_GCN2_rpt2"/>
    <property type="match status" value="1"/>
</dbReference>
<dbReference type="FunFam" id="1.10.510.10:FF:001061">
    <property type="entry name" value="eIF-2-alpha kinase GCN2"/>
    <property type="match status" value="1"/>
</dbReference>
<dbReference type="FunFam" id="3.10.110.10:FF:000050">
    <property type="entry name" value="eIF-2-alpha kinase GCN2"/>
    <property type="match status" value="1"/>
</dbReference>
<dbReference type="FunFam" id="3.30.200.20:FF:000379">
    <property type="entry name" value="eIF-2-alpha kinase GCN2"/>
    <property type="match status" value="1"/>
</dbReference>
<dbReference type="FunFam" id="3.40.50.800:FF:000009">
    <property type="entry name" value="Eukaryotic translation initiation factor 2-alpha kinase"/>
    <property type="match status" value="1"/>
</dbReference>
<dbReference type="FunFam" id="3.30.930.10:FF:000074">
    <property type="entry name" value="Serine/threonine-protein kinase gcn2"/>
    <property type="match status" value="1"/>
</dbReference>
<dbReference type="Gene3D" id="3.40.50.800">
    <property type="entry name" value="Anticodon-binding domain"/>
    <property type="match status" value="1"/>
</dbReference>
<dbReference type="Gene3D" id="3.30.930.10">
    <property type="entry name" value="Bira Bifunctional Protein, Domain 2"/>
    <property type="match status" value="1"/>
</dbReference>
<dbReference type="Gene3D" id="3.30.200.20">
    <property type="entry name" value="Phosphorylase Kinase, domain 1"/>
    <property type="match status" value="1"/>
</dbReference>
<dbReference type="Gene3D" id="1.10.510.10">
    <property type="entry name" value="Transferase(Phosphotransferase) domain 1"/>
    <property type="match status" value="2"/>
</dbReference>
<dbReference type="Gene3D" id="3.10.110.10">
    <property type="entry name" value="Ubiquitin Conjugating Enzyme"/>
    <property type="match status" value="1"/>
</dbReference>
<dbReference type="InterPro" id="IPR045864">
    <property type="entry name" value="aa-tRNA-synth_II/BPL/LPL"/>
</dbReference>
<dbReference type="InterPro" id="IPR036621">
    <property type="entry name" value="Anticodon-bd_dom_sf"/>
</dbReference>
<dbReference type="InterPro" id="IPR050339">
    <property type="entry name" value="CC_SR_Kinase"/>
</dbReference>
<dbReference type="InterPro" id="IPR016255">
    <property type="entry name" value="Gcn2"/>
</dbReference>
<dbReference type="InterPro" id="IPR041715">
    <property type="entry name" value="HisRS-like_core"/>
</dbReference>
<dbReference type="InterPro" id="IPR024435">
    <property type="entry name" value="HisRS-related_dom"/>
</dbReference>
<dbReference type="InterPro" id="IPR011009">
    <property type="entry name" value="Kinase-like_dom_sf"/>
</dbReference>
<dbReference type="InterPro" id="IPR000719">
    <property type="entry name" value="Prot_kinase_dom"/>
</dbReference>
<dbReference type="InterPro" id="IPR017441">
    <property type="entry name" value="Protein_kinase_ATP_BS"/>
</dbReference>
<dbReference type="InterPro" id="IPR006575">
    <property type="entry name" value="RWD_dom"/>
</dbReference>
<dbReference type="InterPro" id="IPR008271">
    <property type="entry name" value="Ser/Thr_kinase_AS"/>
</dbReference>
<dbReference type="InterPro" id="IPR016135">
    <property type="entry name" value="UBQ-conjugating_enzyme/RWD"/>
</dbReference>
<dbReference type="PANTHER" id="PTHR11042">
    <property type="entry name" value="EUKARYOTIC TRANSLATION INITIATION FACTOR 2-ALPHA KINASE EIF2-ALPHA KINASE -RELATED"/>
    <property type="match status" value="1"/>
</dbReference>
<dbReference type="Pfam" id="PF12745">
    <property type="entry name" value="HGTP_anticodon2"/>
    <property type="match status" value="1"/>
</dbReference>
<dbReference type="Pfam" id="PF00069">
    <property type="entry name" value="Pkinase"/>
    <property type="match status" value="3"/>
</dbReference>
<dbReference type="Pfam" id="PF05773">
    <property type="entry name" value="RWD"/>
    <property type="match status" value="1"/>
</dbReference>
<dbReference type="Pfam" id="PF13393">
    <property type="entry name" value="tRNA-synt_His"/>
    <property type="match status" value="1"/>
</dbReference>
<dbReference type="PIRSF" id="PIRSF000660">
    <property type="entry name" value="Ser/Thr_PK_GCN2"/>
    <property type="match status" value="1"/>
</dbReference>
<dbReference type="SMART" id="SM00591">
    <property type="entry name" value="RWD"/>
    <property type="match status" value="1"/>
</dbReference>
<dbReference type="SMART" id="SM00220">
    <property type="entry name" value="S_TKc"/>
    <property type="match status" value="2"/>
</dbReference>
<dbReference type="SUPFAM" id="SSF55681">
    <property type="entry name" value="Class II aaRS and biotin synthetases"/>
    <property type="match status" value="1"/>
</dbReference>
<dbReference type="SUPFAM" id="SSF56112">
    <property type="entry name" value="Protein kinase-like (PK-like)"/>
    <property type="match status" value="2"/>
</dbReference>
<dbReference type="SUPFAM" id="SSF54495">
    <property type="entry name" value="UBC-like"/>
    <property type="match status" value="1"/>
</dbReference>
<dbReference type="PROSITE" id="PS00107">
    <property type="entry name" value="PROTEIN_KINASE_ATP"/>
    <property type="match status" value="1"/>
</dbReference>
<dbReference type="PROSITE" id="PS50011">
    <property type="entry name" value="PROTEIN_KINASE_DOM"/>
    <property type="match status" value="2"/>
</dbReference>
<dbReference type="PROSITE" id="PS00108">
    <property type="entry name" value="PROTEIN_KINASE_ST"/>
    <property type="match status" value="1"/>
</dbReference>
<dbReference type="PROSITE" id="PS50908">
    <property type="entry name" value="RWD"/>
    <property type="match status" value="1"/>
</dbReference>
<evidence type="ECO:0000250" key="1">
    <source>
        <dbReference type="UniProtKB" id="P15442"/>
    </source>
</evidence>
<evidence type="ECO:0000255" key="2">
    <source>
        <dbReference type="PROSITE-ProRule" id="PRU00159"/>
    </source>
</evidence>
<evidence type="ECO:0000255" key="3">
    <source>
        <dbReference type="PROSITE-ProRule" id="PRU00179"/>
    </source>
</evidence>
<evidence type="ECO:0000255" key="4">
    <source>
        <dbReference type="PROSITE-ProRule" id="PRU10027"/>
    </source>
</evidence>
<evidence type="ECO:0000256" key="5">
    <source>
        <dbReference type="SAM" id="MobiDB-lite"/>
    </source>
</evidence>
<evidence type="ECO:0000269" key="6">
    <source>
    </source>
</evidence>
<evidence type="ECO:0000269" key="7">
    <source>
    </source>
</evidence>
<evidence type="ECO:0000269" key="8">
    <source>
    </source>
</evidence>
<evidence type="ECO:0000312" key="9">
    <source>
        <dbReference type="PomBase" id="SPBC36B7.09"/>
    </source>
</evidence>
<gene>
    <name evidence="9" type="primary">gcn2</name>
    <name type="synonym">ppk28</name>
    <name type="ORF">SPBC36B7.09</name>
    <name type="ORF">SPBP18G5.01</name>
</gene>
<proteinExistence type="evidence at transcript level"/>
<feature type="chain" id="PRO_0000085962" description="eIF-2-alpha kinase GCN2">
    <location>
        <begin position="1"/>
        <end position="1576"/>
    </location>
</feature>
<feature type="domain" description="RWD" evidence="3">
    <location>
        <begin position="16"/>
        <end position="127"/>
    </location>
</feature>
<feature type="domain" description="Protein kinase 1" evidence="2">
    <location>
        <begin position="235"/>
        <end position="511"/>
    </location>
</feature>
<feature type="domain" description="Protein kinase 2" evidence="2">
    <location>
        <begin position="556"/>
        <end position="928"/>
    </location>
</feature>
<feature type="region of interest" description="Disordered" evidence="5">
    <location>
        <begin position="180"/>
        <end position="204"/>
    </location>
</feature>
<feature type="region of interest" description="Disordered" evidence="5">
    <location>
        <begin position="673"/>
        <end position="714"/>
    </location>
</feature>
<feature type="compositionally biased region" description="Basic and acidic residues" evidence="5">
    <location>
        <begin position="695"/>
        <end position="706"/>
    </location>
</feature>
<feature type="active site" description="Proton acceptor" evidence="2 4">
    <location>
        <position position="772"/>
    </location>
</feature>
<feature type="binding site" evidence="2">
    <location>
        <begin position="562"/>
        <end position="570"/>
    </location>
    <ligand>
        <name>ATP</name>
        <dbReference type="ChEBI" id="CHEBI:30616"/>
    </ligand>
</feature>
<feature type="binding site" evidence="2">
    <location>
        <position position="585"/>
    </location>
    <ligand>
        <name>ATP</name>
        <dbReference type="ChEBI" id="CHEBI:30616"/>
    </ligand>
</feature>
<name>GCN2_SCHPO</name>
<sequence length="1576" mass="181193">MDAAKRLELCKEIQENEIEALKAIFMDDFEELKVRNAWNVTNGHVYCIHLCSRSANSKSIAKLDLCIELGRSYPYVKPVIKLQNGENVLNSQIRFLLDKLDTKAKDLLGEEMIFELASIVQDYLNDWQSDLSSQFASLEEERAVQLKHDRERAEVDLQLRLKREKDALFEEEQTLQNKIQDELQRRSYETPQSSSKKKTNSKETTSLETLPTSIYFDCSISVRDCHDSLVTFNRVLPLYTISHSNLSTLTLVKPESKEISLQDCVFLLRTVRISTPYWSTEDGKREIQELEYELESLKVIRHDLLASIYEYQLERETRGYGWRLYVLQEYSPKFTLFSLLQTVLTLDVETVRAFSNNILEGLAELHRLGISHKSLHLDNVVLFHSGHRTFAKLMDFGFTRTLRDMNASHPFNINSQSITNILPEGLYPPEVSESSFAAASRKTDIWCFGLLVLQMLCGAHVLNKFSSLKLIMTHVIPLLPGSYQDLVRRCLMRDSRKRPSAIDLLSSHVIRLGTAVLPPVEQGTFSKSARPSYGGQQDGIIDLLYRKSVSRYETDFEELEFLGRGGFGEVVKVKNRIDGRFYAVKKLVLLSDDKENSRILREVMTLSRLHHEHVVRYYTAWVETEANDTVTEIISSDSESLSQSLNMAVDFRQSSSLPADKLSSLDIHFEDDYNSSADEEDPEASDISFQYSNTSDKEGSSDKDSSIEEASSVKTQENGLNATLYIQMEYCEKLSLQDIIRDKIPVDEMWRLFRQILEALAYIHSRGMMHRDLKPGNIFLDENRNVKLGDFGLATENENYQDNNDKWKNRQSADEDLTTGVGTALYVAPELLSRRNGVRYDAKVDMYSLGIILFEMCMTFSTSMERIRIIDTIRSPSISFPSTFPFSRASHEFKVIHCLLQHDPTKRPSSQELLESEAIPPKVGEEFIQEGLRLLSNPNTPYYLKLLKVLFGQVPDRHKDFTYDFNLSEESGVLSKVSDRGWDSLLACLVRDHVVKVFRRHGAKERESHILFPKSSQYDKDQASVSLLDKNGTLLQLPYDTVLPYARNVARNAVEEEKTYLISDVFREAKGGGRPKAIKEISFDITTNSDNLDWYDAETIKALDEVLTEIPSLTESCILINHADILSSILDYLQVSKDKRRMATHILGQINQRLTLSQVRNQLRIESLVPSTTLDDLSLFDFRENYEEGASKLRKIFGKEMPQKMRTALNYMERVVKLLRALKISHQLYFMPLCVYNFEFYDGGLMFQAINLAEKSELICAGGRYDKLVRFFDPPLMRTARKKHVVGICFALEKLVFSMLRYIRFHNSKQSSKHSPSPTLKSVGPWAPRRVDVLVTSIGKDSILEKCSLLQELWALNIQADIVLRGASSLEEIVTHYRSEGINWVLVVRQKNTQMEHSVKARNILKNEDDEIRFDEVGMWLLGEINERKRNESMLQSKRILDSAQQDVAKFVDTSQSNLDVQLISLKDVNDRKYKWKHKQNAMNKVYDLVQSAIRESSEDAIALAVDCDSEAMEKLRSTTTLDEESWKRLIESCPASQREYMQRLQKKLVTLAEQDKKRVWICSFRTNEIYLYGLK</sequence>
<organism>
    <name type="scientific">Schizosaccharomyces pombe (strain 972 / ATCC 24843)</name>
    <name type="common">Fission yeast</name>
    <dbReference type="NCBI Taxonomy" id="284812"/>
    <lineage>
        <taxon>Eukaryota</taxon>
        <taxon>Fungi</taxon>
        <taxon>Dikarya</taxon>
        <taxon>Ascomycota</taxon>
        <taxon>Taphrinomycotina</taxon>
        <taxon>Schizosaccharomycetes</taxon>
        <taxon>Schizosaccharomycetales</taxon>
        <taxon>Schizosaccharomycetaceae</taxon>
        <taxon>Schizosaccharomyces</taxon>
    </lineage>
</organism>